<name>MATK_LEPVR</name>
<keyword id="KW-0150">Chloroplast</keyword>
<keyword id="KW-0507">mRNA processing</keyword>
<keyword id="KW-0934">Plastid</keyword>
<keyword id="KW-0694">RNA-binding</keyword>
<keyword id="KW-0819">tRNA processing</keyword>
<gene>
    <name evidence="1" type="primary">matK</name>
</gene>
<comment type="function">
    <text evidence="1">Usually encoded in the trnK tRNA gene intron. Probably assists in splicing its own and other chloroplast group II introns.</text>
</comment>
<comment type="subcellular location">
    <subcellularLocation>
        <location>Plastid</location>
        <location>Chloroplast</location>
    </subcellularLocation>
</comment>
<comment type="similarity">
    <text evidence="1">Belongs to the intron maturase 2 family. MatK subfamily.</text>
</comment>
<comment type="sequence caution" evidence="2">
    <conflict type="erroneous initiation">
        <sequence resource="EMBL-CDS" id="BAF50442"/>
    </conflict>
</comment>
<dbReference type="EMBL" id="AP009374">
    <property type="protein sequence ID" value="BAF50442.1"/>
    <property type="status" value="ALT_INIT"/>
    <property type="molecule type" value="Genomic_DNA"/>
</dbReference>
<dbReference type="RefSeq" id="YP_001123618.1">
    <property type="nucleotide sequence ID" value="NC_009273.1"/>
</dbReference>
<dbReference type="GeneID" id="4962005"/>
<dbReference type="GO" id="GO:0009507">
    <property type="term" value="C:chloroplast"/>
    <property type="evidence" value="ECO:0007669"/>
    <property type="project" value="UniProtKB-SubCell"/>
</dbReference>
<dbReference type="GO" id="GO:0003723">
    <property type="term" value="F:RNA binding"/>
    <property type="evidence" value="ECO:0007669"/>
    <property type="project" value="UniProtKB-KW"/>
</dbReference>
<dbReference type="GO" id="GO:0006397">
    <property type="term" value="P:mRNA processing"/>
    <property type="evidence" value="ECO:0007669"/>
    <property type="project" value="UniProtKB-KW"/>
</dbReference>
<dbReference type="GO" id="GO:0008380">
    <property type="term" value="P:RNA splicing"/>
    <property type="evidence" value="ECO:0007669"/>
    <property type="project" value="UniProtKB-UniRule"/>
</dbReference>
<dbReference type="GO" id="GO:0008033">
    <property type="term" value="P:tRNA processing"/>
    <property type="evidence" value="ECO:0007669"/>
    <property type="project" value="UniProtKB-KW"/>
</dbReference>
<dbReference type="HAMAP" id="MF_01390">
    <property type="entry name" value="MatK"/>
    <property type="match status" value="1"/>
</dbReference>
<dbReference type="InterPro" id="IPR024937">
    <property type="entry name" value="Domain_X"/>
</dbReference>
<dbReference type="InterPro" id="IPR002866">
    <property type="entry name" value="Maturase_MatK"/>
</dbReference>
<dbReference type="InterPro" id="IPR024942">
    <property type="entry name" value="Maturase_MatK_N"/>
</dbReference>
<dbReference type="PANTHER" id="PTHR34811">
    <property type="entry name" value="MATURASE K"/>
    <property type="match status" value="1"/>
</dbReference>
<dbReference type="PANTHER" id="PTHR34811:SF1">
    <property type="entry name" value="MATURASE K"/>
    <property type="match status" value="1"/>
</dbReference>
<dbReference type="Pfam" id="PF01348">
    <property type="entry name" value="Intron_maturas2"/>
    <property type="match status" value="1"/>
</dbReference>
<dbReference type="Pfam" id="PF01824">
    <property type="entry name" value="MatK_N"/>
    <property type="match status" value="1"/>
</dbReference>
<feature type="chain" id="PRO_0000355943" description="Maturase K">
    <location>
        <begin position="1"/>
        <end position="504"/>
    </location>
</feature>
<sequence>MEKFQGYLEFDGARQQSFLYPLFFREYIYVLAYDHGLNRLNRNRSIFFENADYDKKYSSLIVKRLILRMYEQNRLIIPTKDLNQNHFLGHTSLFYYQIISVLFAVIVEIPFSLRLGSSFEGKQLKKSDNLQSIHSIFPFLEDKFSHFNYVLDLQIPYPIHLEILVQTLRYRVKDASSLHFFRFCLYEYCNWKNFYIKKKAILNPRIFLFLYNSHICEYESIFFFLRKRSSHLRSTSYEVLFERILFYGKIQHFLKVFVNNFPAILGLLKDPFIHYVRYHGRCILATKDTPLLMNKWKYYFVNLWQCYFSVWFQSQKVNINQLSKDNLEFLGYLSSLRLNPLVVRSQMLENSFLMDNVRIKLDTKIPISSISRSLAKDKFCNVLGHPISKATWTDSSDSDILNRFVRICRNISHYYSGSSKKNNLYRIKYILRQSCVKTLARKHKSTVRAFLKGLGSGLLEEFLTGEDQILSLIFPRSYYASKRLYRVRIWYLDILYLNDLVNHE</sequence>
<geneLocation type="chloroplast"/>
<organism>
    <name type="scientific">Lepidium virginicum</name>
    <name type="common">Virginia pepperweed</name>
    <dbReference type="NCBI Taxonomy" id="59292"/>
    <lineage>
        <taxon>Eukaryota</taxon>
        <taxon>Viridiplantae</taxon>
        <taxon>Streptophyta</taxon>
        <taxon>Embryophyta</taxon>
        <taxon>Tracheophyta</taxon>
        <taxon>Spermatophyta</taxon>
        <taxon>Magnoliopsida</taxon>
        <taxon>eudicotyledons</taxon>
        <taxon>Gunneridae</taxon>
        <taxon>Pentapetalae</taxon>
        <taxon>rosids</taxon>
        <taxon>malvids</taxon>
        <taxon>Brassicales</taxon>
        <taxon>Brassicaceae</taxon>
        <taxon>Lepidieae</taxon>
        <taxon>Lepidium</taxon>
    </lineage>
</organism>
<protein>
    <recommendedName>
        <fullName evidence="1">Maturase K</fullName>
    </recommendedName>
    <alternativeName>
        <fullName evidence="1">Intron maturase</fullName>
    </alternativeName>
</protein>
<evidence type="ECO:0000255" key="1">
    <source>
        <dbReference type="HAMAP-Rule" id="MF_01390"/>
    </source>
</evidence>
<evidence type="ECO:0000305" key="2"/>
<reference key="1">
    <citation type="submission" date="2007-03" db="EMBL/GenBank/DDBJ databases">
        <title>Sequencing analysis of Lepidium virginicum JO26 chloroplast DNA.</title>
        <authorList>
            <person name="Hosouchi T."/>
            <person name="Tsuruoka H."/>
            <person name="Kotani H."/>
        </authorList>
    </citation>
    <scope>NUCLEOTIDE SEQUENCE [LARGE SCALE GENOMIC DNA]</scope>
</reference>
<proteinExistence type="inferred from homology"/>
<accession>A4QL87</accession>